<organism>
    <name type="scientific">Spinacia oleracea</name>
    <name type="common">Spinach</name>
    <dbReference type="NCBI Taxonomy" id="3562"/>
    <lineage>
        <taxon>Eukaryota</taxon>
        <taxon>Viridiplantae</taxon>
        <taxon>Streptophyta</taxon>
        <taxon>Embryophyta</taxon>
        <taxon>Tracheophyta</taxon>
        <taxon>Spermatophyta</taxon>
        <taxon>Magnoliopsida</taxon>
        <taxon>eudicotyledons</taxon>
        <taxon>Gunneridae</taxon>
        <taxon>Pentapetalae</taxon>
        <taxon>Caryophyllales</taxon>
        <taxon>Chenopodiaceae</taxon>
        <taxon>Chenopodioideae</taxon>
        <taxon>Anserineae</taxon>
        <taxon>Spinacia</taxon>
    </lineage>
</organism>
<gene>
    <name type="primary">RPL19</name>
    <name type="synonym">PRPL19</name>
    <name type="ORF">SOVF_150800</name>
</gene>
<name>RK19_SPIOL</name>
<comment type="function">
    <text evidence="6 7">Component of the chloroplast ribosome (chloro-ribosome), a dedicated translation machinery responsible for the synthesis of chloroplast genome-encoded proteins, including proteins of the transcription and translation machinery and components of the photosynthetic apparatus.</text>
</comment>
<comment type="subunit">
    <text evidence="2 3">Component of the chloroplast large ribosomal subunit (LSU). Mature 70S chloroplast ribosomes of higher plants consist of a small (30S) and a large (50S) subunit. The 30S small subunit contains 1 molecule of ribosomal RNA (16S rRNA) and 24 different proteins. The 50S large subunit contains 3 rRNA molecules (23S, 5S and 4.5S rRNA) and 33 different proteins.</text>
</comment>
<comment type="subcellular location">
    <subcellularLocation>
        <location evidence="2 3">Plastid</location>
        <location evidence="2 3">Chloroplast</location>
    </subcellularLocation>
</comment>
<comment type="mass spectrometry"/>
<comment type="similarity">
    <text evidence="1">Belongs to the bacterial ribosomal protein bL19 family.</text>
</comment>
<reference key="1">
    <citation type="journal article" date="2000" name="J. Biol. Chem.">
        <title>The plastid ribosomal proteins. Identification of all the proteins in the 50S subunit of an organelle ribosome (chloroplast).</title>
        <authorList>
            <person name="Yamaguchi K."/>
            <person name="Subramanian A.R."/>
        </authorList>
    </citation>
    <scope>NUCLEOTIDE SEQUENCE [MRNA]</scope>
    <scope>PROTEIN SEQUENCE OF 78-102; 200-214 AND 226-233</scope>
    <scope>SUBUNIT</scope>
    <scope>SUBCELLULAR LOCATION</scope>
    <scope>MASS SPECTROMETRY</scope>
    <source>
        <strain>cv. Alwaro</strain>
        <tissue>Leaf</tissue>
    </source>
</reference>
<reference key="2">
    <citation type="journal article" date="2014" name="Nature">
        <title>The genome of the recently domesticated crop plant sugar beet (Beta vulgaris).</title>
        <authorList>
            <person name="Dohm J.C."/>
            <person name="Minoche A.E."/>
            <person name="Holtgraewe D."/>
            <person name="Capella-Gutierrez S."/>
            <person name="Zakrzewski F."/>
            <person name="Tafer H."/>
            <person name="Rupp O."/>
            <person name="Soerensen T.R."/>
            <person name="Stracke R."/>
            <person name="Reinhardt R."/>
            <person name="Goesmann A."/>
            <person name="Kraft T."/>
            <person name="Schulz B."/>
            <person name="Stadler P.F."/>
            <person name="Schmidt T."/>
            <person name="Gabaldon T."/>
            <person name="Lehrach H."/>
            <person name="Weisshaar B."/>
            <person name="Himmelbauer H."/>
        </authorList>
    </citation>
    <scope>NUCLEOTIDE SEQUENCE [LARGE SCALE GENOMIC DNA]</scope>
    <source>
        <strain>cv. Viroflay</strain>
        <tissue>Leaf</tissue>
    </source>
</reference>
<reference key="3">
    <citation type="journal article" date="2007" name="Proc. Natl. Acad. Sci. U.S.A.">
        <title>Cryo-EM study of the spinach chloroplast ribosome reveals the structural and functional roles of plastid-specific ribosomal proteins.</title>
        <authorList>
            <person name="Sharma M.R."/>
            <person name="Wilson D.N."/>
            <person name="Datta P.P."/>
            <person name="Barat C."/>
            <person name="Schluenzen F."/>
            <person name="Fucini P."/>
            <person name="Agrawal R.K."/>
        </authorList>
    </citation>
    <scope>STRUCTURE BY ELECTRON MICROSCOPY (9.4 ANGSTROMS)</scope>
</reference>
<reference key="4">
    <citation type="journal article" date="2016" name="Sci. Rep.">
        <title>Cryo-EM structure of the large subunit of the spinach chloroplast ribosome.</title>
        <authorList>
            <person name="Ahmed T."/>
            <person name="Yin Z."/>
            <person name="Bhushan S."/>
        </authorList>
    </citation>
    <scope>STRUCTURE BY ELECTRON MICROSCOPY (3.50 ANGSTROMS)</scope>
</reference>
<reference key="5">
    <citation type="journal article" date="2017" name="EMBO J.">
        <title>The complete structure of the chloroplast 70S ribosome in complex with translation factor pY.</title>
        <authorList>
            <person name="Bieri P."/>
            <person name="Leibundgut M."/>
            <person name="Saurer M."/>
            <person name="Boehringer D."/>
            <person name="Ban N."/>
        </authorList>
    </citation>
    <scope>STRUCTURE BY ELECTRON MICROSCOPY (3.25 ANGSTROMS)</scope>
    <scope>SUBUNIT</scope>
    <scope>SUBCELLULAR LOCATION</scope>
</reference>
<accession>P82413</accession>
<accession>A0A0K9QR20</accession>
<accession>Q9M4W1</accession>
<evidence type="ECO:0000255" key="1"/>
<evidence type="ECO:0000269" key="2">
    <source>
    </source>
</evidence>
<evidence type="ECO:0000269" key="3">
    <source>
    </source>
</evidence>
<evidence type="ECO:0000303" key="4">
    <source>
    </source>
</evidence>
<evidence type="ECO:0000303" key="5">
    <source>
    </source>
</evidence>
<evidence type="ECO:0000305" key="6">
    <source>
    </source>
</evidence>
<evidence type="ECO:0000305" key="7">
    <source>
    </source>
</evidence>
<evidence type="ECO:0007829" key="8">
    <source>
        <dbReference type="PDB" id="5H1S"/>
    </source>
</evidence>
<evidence type="ECO:0007829" key="9">
    <source>
        <dbReference type="PDB" id="5MMI"/>
    </source>
</evidence>
<dbReference type="EMBL" id="KQ165118">
    <property type="protein sequence ID" value="KNA09749.1"/>
    <property type="molecule type" value="Genomic_DNA"/>
</dbReference>
<dbReference type="EMBL" id="AF250384">
    <property type="protein sequence ID" value="AAF64312.1"/>
    <property type="molecule type" value="mRNA"/>
</dbReference>
<dbReference type="PDB" id="4V61">
    <property type="method" value="EM"/>
    <property type="resolution" value="9.40 A"/>
    <property type="chains" value="BR=1-233"/>
</dbReference>
<dbReference type="PDB" id="5H1S">
    <property type="method" value="EM"/>
    <property type="resolution" value="3.50 A"/>
    <property type="chains" value="R=78-233"/>
</dbReference>
<dbReference type="PDB" id="5MLC">
    <property type="method" value="EM"/>
    <property type="resolution" value="3.90 A"/>
    <property type="chains" value="R=1-233"/>
</dbReference>
<dbReference type="PDB" id="5MMI">
    <property type="method" value="EM"/>
    <property type="resolution" value="3.25 A"/>
    <property type="chains" value="Q=1-233"/>
</dbReference>
<dbReference type="PDB" id="5MMM">
    <property type="method" value="EM"/>
    <property type="resolution" value="3.40 A"/>
    <property type="chains" value="Q=1-233"/>
</dbReference>
<dbReference type="PDB" id="5X8P">
    <property type="method" value="EM"/>
    <property type="resolution" value="3.40 A"/>
    <property type="chains" value="Q=78-233"/>
</dbReference>
<dbReference type="PDB" id="5X8T">
    <property type="method" value="EM"/>
    <property type="resolution" value="3.30 A"/>
    <property type="chains" value="Q=78-233"/>
</dbReference>
<dbReference type="PDB" id="6ERI">
    <property type="method" value="EM"/>
    <property type="resolution" value="3.00 A"/>
    <property type="chains" value="AP=115-232"/>
</dbReference>
<dbReference type="PDBsum" id="4V61"/>
<dbReference type="PDBsum" id="5H1S"/>
<dbReference type="PDBsum" id="5MLC"/>
<dbReference type="PDBsum" id="5MMI"/>
<dbReference type="PDBsum" id="5MMM"/>
<dbReference type="PDBsum" id="5X8P"/>
<dbReference type="PDBsum" id="5X8T"/>
<dbReference type="PDBsum" id="6ERI"/>
<dbReference type="EMDB" id="EMD-3525"/>
<dbReference type="EMDB" id="EMD-3531"/>
<dbReference type="EMDB" id="EMD-3533"/>
<dbReference type="EMDB" id="EMD-3941"/>
<dbReference type="EMDB" id="EMD-6709"/>
<dbReference type="EMDB" id="EMD-6711"/>
<dbReference type="EMDB" id="EMD-9572"/>
<dbReference type="SMR" id="P82413"/>
<dbReference type="IntAct" id="P82413">
    <property type="interactions" value="1"/>
</dbReference>
<dbReference type="STRING" id="3562.P82413"/>
<dbReference type="OrthoDB" id="432645at2759"/>
<dbReference type="Proteomes" id="UP001155700">
    <property type="component" value="Unplaced"/>
</dbReference>
<dbReference type="GO" id="GO:0009507">
    <property type="term" value="C:chloroplast"/>
    <property type="evidence" value="ECO:0007669"/>
    <property type="project" value="UniProtKB-SubCell"/>
</dbReference>
<dbReference type="GO" id="GO:1990904">
    <property type="term" value="C:ribonucleoprotein complex"/>
    <property type="evidence" value="ECO:0007669"/>
    <property type="project" value="UniProtKB-KW"/>
</dbReference>
<dbReference type="GO" id="GO:0005840">
    <property type="term" value="C:ribosome"/>
    <property type="evidence" value="ECO:0007669"/>
    <property type="project" value="UniProtKB-KW"/>
</dbReference>
<dbReference type="GO" id="GO:0019843">
    <property type="term" value="F:rRNA binding"/>
    <property type="evidence" value="ECO:0007669"/>
    <property type="project" value="UniProtKB-KW"/>
</dbReference>
<dbReference type="GO" id="GO:0003735">
    <property type="term" value="F:structural constituent of ribosome"/>
    <property type="evidence" value="ECO:0000318"/>
    <property type="project" value="GO_Central"/>
</dbReference>
<dbReference type="GO" id="GO:0006412">
    <property type="term" value="P:translation"/>
    <property type="evidence" value="ECO:0007669"/>
    <property type="project" value="InterPro"/>
</dbReference>
<dbReference type="FunFam" id="2.30.30.790:FF:000004">
    <property type="entry name" value="50S ribosomal protein L19, chloroplastic"/>
    <property type="match status" value="1"/>
</dbReference>
<dbReference type="Gene3D" id="2.30.30.790">
    <property type="match status" value="1"/>
</dbReference>
<dbReference type="InterPro" id="IPR001857">
    <property type="entry name" value="Ribosomal_bL19"/>
</dbReference>
<dbReference type="InterPro" id="IPR038657">
    <property type="entry name" value="Ribosomal_bL19_sf"/>
</dbReference>
<dbReference type="InterPro" id="IPR008991">
    <property type="entry name" value="Translation_prot_SH3-like_sf"/>
</dbReference>
<dbReference type="NCBIfam" id="TIGR01024">
    <property type="entry name" value="rplS_bact"/>
    <property type="match status" value="1"/>
</dbReference>
<dbReference type="PANTHER" id="PTHR15680:SF10">
    <property type="entry name" value="LARGE RIBOSOMAL SUBUNIT PROTEIN BL19CY-RELATED"/>
    <property type="match status" value="1"/>
</dbReference>
<dbReference type="PANTHER" id="PTHR15680">
    <property type="entry name" value="RIBOSOMAL PROTEIN L19"/>
    <property type="match status" value="1"/>
</dbReference>
<dbReference type="Pfam" id="PF01245">
    <property type="entry name" value="Ribosomal_L19"/>
    <property type="match status" value="1"/>
</dbReference>
<dbReference type="PRINTS" id="PR00061">
    <property type="entry name" value="RIBOSOMALL19"/>
</dbReference>
<dbReference type="SUPFAM" id="SSF50104">
    <property type="entry name" value="Translation proteins SH3-like domain"/>
    <property type="match status" value="1"/>
</dbReference>
<feature type="transit peptide" description="Chloroplast" evidence="2">
    <location>
        <begin position="1"/>
        <end position="77"/>
    </location>
</feature>
<feature type="chain" id="PRO_0000249233" description="Large ribosomal subunit protein bL19c">
    <location>
        <begin position="78"/>
        <end position="233"/>
    </location>
</feature>
<feature type="helix" evidence="9">
    <location>
        <begin position="119"/>
        <end position="137"/>
    </location>
</feature>
<feature type="strand" evidence="9">
    <location>
        <begin position="147"/>
        <end position="153"/>
    </location>
</feature>
<feature type="strand" evidence="8">
    <location>
        <begin position="156"/>
        <end position="160"/>
    </location>
</feature>
<feature type="strand" evidence="9">
    <location>
        <begin position="163"/>
        <end position="173"/>
    </location>
</feature>
<feature type="helix" evidence="9">
    <location>
        <begin position="176"/>
        <end position="178"/>
    </location>
</feature>
<feature type="strand" evidence="9">
    <location>
        <begin position="180"/>
        <end position="187"/>
    </location>
</feature>
<feature type="strand" evidence="9">
    <location>
        <begin position="190"/>
        <end position="197"/>
    </location>
</feature>
<feature type="strand" evidence="9">
    <location>
        <begin position="203"/>
        <end position="211"/>
    </location>
</feature>
<feature type="strand" evidence="8">
    <location>
        <begin position="215"/>
        <end position="217"/>
    </location>
</feature>
<feature type="turn" evidence="9">
    <location>
        <begin position="221"/>
        <end position="224"/>
    </location>
</feature>
<feature type="helix" evidence="9">
    <location>
        <begin position="227"/>
        <end position="230"/>
    </location>
</feature>
<proteinExistence type="evidence at protein level"/>
<keyword id="KW-0002">3D-structure</keyword>
<keyword id="KW-0150">Chloroplast</keyword>
<keyword id="KW-0903">Direct protein sequencing</keyword>
<keyword id="KW-0934">Plastid</keyword>
<keyword id="KW-1185">Reference proteome</keyword>
<keyword id="KW-0687">Ribonucleoprotein</keyword>
<keyword id="KW-0689">Ribosomal protein</keyword>
<keyword id="KW-0694">RNA-binding</keyword>
<keyword id="KW-0699">rRNA-binding</keyword>
<keyword id="KW-0809">Transit peptide</keyword>
<sequence>MASKVLPQALLVIPSNHSLQCPPLKKQLGFPIDSNRRFSLSSNCRSNLMVSRASSNLFSSNFSSIFSFPARNSFVVRSEAEDSSDAPAESVAVVAEEELPVESEAEAEERPPRQQRVKLGDIMGILNKKAVHAAEELRPVPGIRTGDIVQIRLEVPENKRRLSVYKGIVISRQNAGIHTTIRIRRIIAGVGVEIVFPLYSPNIKEIKVVSHRKVRKARLYYLRDKLPRLSTFK</sequence>
<protein>
    <recommendedName>
        <fullName evidence="5">Large ribosomal subunit protein bL19c</fullName>
    </recommendedName>
    <alternativeName>
        <fullName evidence="4">50S ribosomal protein L19, chloroplastic</fullName>
    </alternativeName>
    <alternativeName>
        <fullName>CL19</fullName>
    </alternativeName>
</protein>